<feature type="chain" id="PRO_0000091396" description="Elongation factor Tu">
    <location>
        <begin position="1"/>
        <end position="394"/>
    </location>
</feature>
<feature type="domain" description="tr-type G">
    <location>
        <begin position="10"/>
        <end position="204"/>
    </location>
</feature>
<feature type="region of interest" description="G1" evidence="1">
    <location>
        <begin position="19"/>
        <end position="26"/>
    </location>
</feature>
<feature type="region of interest" description="G2" evidence="1">
    <location>
        <begin position="60"/>
        <end position="64"/>
    </location>
</feature>
<feature type="region of interest" description="G3" evidence="1">
    <location>
        <begin position="81"/>
        <end position="84"/>
    </location>
</feature>
<feature type="region of interest" description="G4" evidence="1">
    <location>
        <begin position="136"/>
        <end position="139"/>
    </location>
</feature>
<feature type="region of interest" description="G5" evidence="1">
    <location>
        <begin position="174"/>
        <end position="176"/>
    </location>
</feature>
<feature type="binding site" evidence="2">
    <location>
        <begin position="19"/>
        <end position="26"/>
    </location>
    <ligand>
        <name>GTP</name>
        <dbReference type="ChEBI" id="CHEBI:37565"/>
    </ligand>
</feature>
<feature type="binding site" evidence="2">
    <location>
        <position position="26"/>
    </location>
    <ligand>
        <name>Mg(2+)</name>
        <dbReference type="ChEBI" id="CHEBI:18420"/>
    </ligand>
</feature>
<feature type="binding site" evidence="2">
    <location>
        <begin position="81"/>
        <end position="85"/>
    </location>
    <ligand>
        <name>GTP</name>
        <dbReference type="ChEBI" id="CHEBI:37565"/>
    </ligand>
</feature>
<feature type="binding site" evidence="2">
    <location>
        <begin position="136"/>
        <end position="139"/>
    </location>
    <ligand>
        <name>GTP</name>
        <dbReference type="ChEBI" id="CHEBI:37565"/>
    </ligand>
</feature>
<accession>Q5HRK4</accession>
<protein>
    <recommendedName>
        <fullName evidence="2">Elongation factor Tu</fullName>
        <shortName evidence="2">EF-Tu</shortName>
        <ecNumber evidence="2">3.6.5.3</ecNumber>
    </recommendedName>
</protein>
<reference key="1">
    <citation type="journal article" date="2005" name="J. Bacteriol.">
        <title>Insights on evolution of virulence and resistance from the complete genome analysis of an early methicillin-resistant Staphylococcus aureus strain and a biofilm-producing methicillin-resistant Staphylococcus epidermidis strain.</title>
        <authorList>
            <person name="Gill S.R."/>
            <person name="Fouts D.E."/>
            <person name="Archer G.L."/>
            <person name="Mongodin E.F."/>
            <person name="DeBoy R.T."/>
            <person name="Ravel J."/>
            <person name="Paulsen I.T."/>
            <person name="Kolonay J.F."/>
            <person name="Brinkac L.M."/>
            <person name="Beanan M.J."/>
            <person name="Dodson R.J."/>
            <person name="Daugherty S.C."/>
            <person name="Madupu R."/>
            <person name="Angiuoli S.V."/>
            <person name="Durkin A.S."/>
            <person name="Haft D.H."/>
            <person name="Vamathevan J.J."/>
            <person name="Khouri H."/>
            <person name="Utterback T.R."/>
            <person name="Lee C."/>
            <person name="Dimitrov G."/>
            <person name="Jiang L."/>
            <person name="Qin H."/>
            <person name="Weidman J."/>
            <person name="Tran K."/>
            <person name="Kang K.H."/>
            <person name="Hance I.R."/>
            <person name="Nelson K.E."/>
            <person name="Fraser C.M."/>
        </authorList>
    </citation>
    <scope>NUCLEOTIDE SEQUENCE [LARGE SCALE GENOMIC DNA]</scope>
    <source>
        <strain>ATCC 35984 / DSM 28319 / BCRC 17069 / CCUG 31568 / BM 3577 / RP62A</strain>
    </source>
</reference>
<keyword id="KW-0963">Cytoplasm</keyword>
<keyword id="KW-0251">Elongation factor</keyword>
<keyword id="KW-0342">GTP-binding</keyword>
<keyword id="KW-0378">Hydrolase</keyword>
<keyword id="KW-0460">Magnesium</keyword>
<keyword id="KW-0479">Metal-binding</keyword>
<keyword id="KW-0547">Nucleotide-binding</keyword>
<keyword id="KW-0648">Protein biosynthesis</keyword>
<keyword id="KW-1185">Reference proteome</keyword>
<comment type="function">
    <text evidence="2">GTP hydrolase that promotes the GTP-dependent binding of aminoacyl-tRNA to the A-site of ribosomes during protein biosynthesis.</text>
</comment>
<comment type="catalytic activity">
    <reaction evidence="2">
        <text>GTP + H2O = GDP + phosphate + H(+)</text>
        <dbReference type="Rhea" id="RHEA:19669"/>
        <dbReference type="ChEBI" id="CHEBI:15377"/>
        <dbReference type="ChEBI" id="CHEBI:15378"/>
        <dbReference type="ChEBI" id="CHEBI:37565"/>
        <dbReference type="ChEBI" id="CHEBI:43474"/>
        <dbReference type="ChEBI" id="CHEBI:58189"/>
        <dbReference type="EC" id="3.6.5.3"/>
    </reaction>
    <physiologicalReaction direction="left-to-right" evidence="2">
        <dbReference type="Rhea" id="RHEA:19670"/>
    </physiologicalReaction>
</comment>
<comment type="subunit">
    <text evidence="2">Monomer.</text>
</comment>
<comment type="subcellular location">
    <subcellularLocation>
        <location evidence="2">Cytoplasm</location>
    </subcellularLocation>
</comment>
<comment type="similarity">
    <text evidence="2">Belongs to the TRAFAC class translation factor GTPase superfamily. Classic translation factor GTPase family. EF-Tu/EF-1A subfamily.</text>
</comment>
<sequence length="394" mass="43158">MAKEKFDRSKEHANIGTIGHVDHGKTTLTAAIATVLAKNGDTVAQSYDMIDNAPEEKERGITINTAHIEYQTDKRHYAHVDCPGHADYVKNMITGAAQMDGGILVVSAADGPMPQTREHILLSRNVGVPALVVFLNKVDMVDDEELLELVEMEVRDLLSEYDFPGDDVPVIAGSALKALEGDAEYEQKILDLMQAVDDYIPTPERDSDKPFMMPVEDVFSITGRGTVATGRVERGQIKVGEEVEIIGMHETSKTTVTGVEMFRKLLDYAEAGDNIGALLRGVAREDVQRGQVLAAPGSITPHTKFKAEVYVLSKDEGGRHTPFFTNYRPQFYFRTTDVTGVVNLPEGTEMVMPGDNVEMTVELIAPIAIEDGTRFSIREGGRTVGSGVVTEIFE</sequence>
<organism>
    <name type="scientific">Staphylococcus epidermidis (strain ATCC 35984 / DSM 28319 / BCRC 17069 / CCUG 31568 / BM 3577 / RP62A)</name>
    <dbReference type="NCBI Taxonomy" id="176279"/>
    <lineage>
        <taxon>Bacteria</taxon>
        <taxon>Bacillati</taxon>
        <taxon>Bacillota</taxon>
        <taxon>Bacilli</taxon>
        <taxon>Bacillales</taxon>
        <taxon>Staphylococcaceae</taxon>
        <taxon>Staphylococcus</taxon>
    </lineage>
</organism>
<proteinExistence type="inferred from homology"/>
<gene>
    <name evidence="2" type="primary">tuf</name>
    <name type="ordered locus">SERP0189</name>
</gene>
<dbReference type="EC" id="3.6.5.3" evidence="2"/>
<dbReference type="EMBL" id="CP000029">
    <property type="protein sequence ID" value="AAW53594.1"/>
    <property type="molecule type" value="Genomic_DNA"/>
</dbReference>
<dbReference type="RefSeq" id="WP_001832289.1">
    <property type="nucleotide sequence ID" value="NC_002976.3"/>
</dbReference>
<dbReference type="SMR" id="Q5HRK4"/>
<dbReference type="STRING" id="176279.SERP0189"/>
<dbReference type="GeneID" id="50019523"/>
<dbReference type="KEGG" id="ser:SERP0189"/>
<dbReference type="eggNOG" id="COG0050">
    <property type="taxonomic scope" value="Bacteria"/>
</dbReference>
<dbReference type="HOGENOM" id="CLU_007265_0_0_9"/>
<dbReference type="Proteomes" id="UP000000531">
    <property type="component" value="Chromosome"/>
</dbReference>
<dbReference type="GO" id="GO:0005829">
    <property type="term" value="C:cytosol"/>
    <property type="evidence" value="ECO:0007669"/>
    <property type="project" value="TreeGrafter"/>
</dbReference>
<dbReference type="GO" id="GO:0005525">
    <property type="term" value="F:GTP binding"/>
    <property type="evidence" value="ECO:0007669"/>
    <property type="project" value="UniProtKB-UniRule"/>
</dbReference>
<dbReference type="GO" id="GO:0003924">
    <property type="term" value="F:GTPase activity"/>
    <property type="evidence" value="ECO:0007669"/>
    <property type="project" value="InterPro"/>
</dbReference>
<dbReference type="GO" id="GO:0003746">
    <property type="term" value="F:translation elongation factor activity"/>
    <property type="evidence" value="ECO:0007669"/>
    <property type="project" value="UniProtKB-UniRule"/>
</dbReference>
<dbReference type="CDD" id="cd01884">
    <property type="entry name" value="EF_Tu"/>
    <property type="match status" value="1"/>
</dbReference>
<dbReference type="CDD" id="cd03697">
    <property type="entry name" value="EFTU_II"/>
    <property type="match status" value="1"/>
</dbReference>
<dbReference type="CDD" id="cd03707">
    <property type="entry name" value="EFTU_III"/>
    <property type="match status" value="1"/>
</dbReference>
<dbReference type="FunFam" id="2.40.30.10:FF:000001">
    <property type="entry name" value="Elongation factor Tu"/>
    <property type="match status" value="1"/>
</dbReference>
<dbReference type="FunFam" id="3.40.50.300:FF:000003">
    <property type="entry name" value="Elongation factor Tu"/>
    <property type="match status" value="1"/>
</dbReference>
<dbReference type="Gene3D" id="3.40.50.300">
    <property type="entry name" value="P-loop containing nucleotide triphosphate hydrolases"/>
    <property type="match status" value="1"/>
</dbReference>
<dbReference type="Gene3D" id="2.40.30.10">
    <property type="entry name" value="Translation factors"/>
    <property type="match status" value="2"/>
</dbReference>
<dbReference type="HAMAP" id="MF_00118_B">
    <property type="entry name" value="EF_Tu_B"/>
    <property type="match status" value="1"/>
</dbReference>
<dbReference type="InterPro" id="IPR041709">
    <property type="entry name" value="EF-Tu_GTP-bd"/>
</dbReference>
<dbReference type="InterPro" id="IPR050055">
    <property type="entry name" value="EF-Tu_GTPase"/>
</dbReference>
<dbReference type="InterPro" id="IPR004161">
    <property type="entry name" value="EFTu-like_2"/>
</dbReference>
<dbReference type="InterPro" id="IPR033720">
    <property type="entry name" value="EFTU_2"/>
</dbReference>
<dbReference type="InterPro" id="IPR031157">
    <property type="entry name" value="G_TR_CS"/>
</dbReference>
<dbReference type="InterPro" id="IPR027417">
    <property type="entry name" value="P-loop_NTPase"/>
</dbReference>
<dbReference type="InterPro" id="IPR005225">
    <property type="entry name" value="Small_GTP-bd"/>
</dbReference>
<dbReference type="InterPro" id="IPR000795">
    <property type="entry name" value="T_Tr_GTP-bd_dom"/>
</dbReference>
<dbReference type="InterPro" id="IPR009000">
    <property type="entry name" value="Transl_B-barrel_sf"/>
</dbReference>
<dbReference type="InterPro" id="IPR009001">
    <property type="entry name" value="Transl_elong_EF1A/Init_IF2_C"/>
</dbReference>
<dbReference type="InterPro" id="IPR004541">
    <property type="entry name" value="Transl_elong_EFTu/EF1A_bac/org"/>
</dbReference>
<dbReference type="InterPro" id="IPR004160">
    <property type="entry name" value="Transl_elong_EFTu/EF1A_C"/>
</dbReference>
<dbReference type="NCBIfam" id="TIGR00485">
    <property type="entry name" value="EF-Tu"/>
    <property type="match status" value="1"/>
</dbReference>
<dbReference type="NCBIfam" id="NF000766">
    <property type="entry name" value="PRK00049.1"/>
    <property type="match status" value="1"/>
</dbReference>
<dbReference type="NCBIfam" id="NF009372">
    <property type="entry name" value="PRK12735.1"/>
    <property type="match status" value="1"/>
</dbReference>
<dbReference type="NCBIfam" id="NF009373">
    <property type="entry name" value="PRK12736.1"/>
    <property type="match status" value="1"/>
</dbReference>
<dbReference type="NCBIfam" id="TIGR00231">
    <property type="entry name" value="small_GTP"/>
    <property type="match status" value="1"/>
</dbReference>
<dbReference type="PANTHER" id="PTHR43721:SF22">
    <property type="entry name" value="ELONGATION FACTOR TU, MITOCHONDRIAL"/>
    <property type="match status" value="1"/>
</dbReference>
<dbReference type="PANTHER" id="PTHR43721">
    <property type="entry name" value="ELONGATION FACTOR TU-RELATED"/>
    <property type="match status" value="1"/>
</dbReference>
<dbReference type="Pfam" id="PF00009">
    <property type="entry name" value="GTP_EFTU"/>
    <property type="match status" value="1"/>
</dbReference>
<dbReference type="Pfam" id="PF03144">
    <property type="entry name" value="GTP_EFTU_D2"/>
    <property type="match status" value="1"/>
</dbReference>
<dbReference type="Pfam" id="PF03143">
    <property type="entry name" value="GTP_EFTU_D3"/>
    <property type="match status" value="1"/>
</dbReference>
<dbReference type="PRINTS" id="PR00315">
    <property type="entry name" value="ELONGATNFCT"/>
</dbReference>
<dbReference type="SUPFAM" id="SSF50465">
    <property type="entry name" value="EF-Tu/eEF-1alpha/eIF2-gamma C-terminal domain"/>
    <property type="match status" value="1"/>
</dbReference>
<dbReference type="SUPFAM" id="SSF52540">
    <property type="entry name" value="P-loop containing nucleoside triphosphate hydrolases"/>
    <property type="match status" value="1"/>
</dbReference>
<dbReference type="SUPFAM" id="SSF50447">
    <property type="entry name" value="Translation proteins"/>
    <property type="match status" value="1"/>
</dbReference>
<dbReference type="PROSITE" id="PS00301">
    <property type="entry name" value="G_TR_1"/>
    <property type="match status" value="1"/>
</dbReference>
<dbReference type="PROSITE" id="PS51722">
    <property type="entry name" value="G_TR_2"/>
    <property type="match status" value="1"/>
</dbReference>
<name>EFTU_STAEQ</name>
<evidence type="ECO:0000250" key="1"/>
<evidence type="ECO:0000255" key="2">
    <source>
        <dbReference type="HAMAP-Rule" id="MF_00118"/>
    </source>
</evidence>